<sequence>MNQGVPPKISFVSLGCPKALVDSERIITRLRAEGYELARKHDGADIVIVSTCGFLDSAKQESLGAIGEAMAENGKVIVTGCMGAEPEQIEKEYPNLLSITGPQQYESVLDAVHRALPPLHNPHLDLLPPQGIKLTPRHYAYLKISEGCNNRCTFCIIPKLRGDLVSRPADDVLREAEKLVVAGVKELLVVSQDTSAYGIDIKYAPSAWKDREVRARFVDLARELGELGAWVRLQYVYPYPHVDDVIPLMGGNILPYLDIPFQHANTEVLKRMRRPAAQDKTLARIHKWREQCPDLTLRSTFIVGFPGETESEFQDLLDWLDEAQIDRLGCFKYEPVAGATSNALENPVPDEIKTARWNALMARQQKISAQRLKRKVGTRQQVIIDEVGPSVAKGRSKADAPQIDGSVYVASRRPLKVGDIVTVKIERADEYDLHGSVAGF</sequence>
<evidence type="ECO:0000255" key="1">
    <source>
        <dbReference type="HAMAP-Rule" id="MF_01865"/>
    </source>
</evidence>
<evidence type="ECO:0000255" key="2">
    <source>
        <dbReference type="PROSITE-ProRule" id="PRU01266"/>
    </source>
</evidence>
<dbReference type="EC" id="2.8.4.4" evidence="1"/>
<dbReference type="EMBL" id="CP001196">
    <property type="protein sequence ID" value="ACI93312.1"/>
    <property type="molecule type" value="Genomic_DNA"/>
</dbReference>
<dbReference type="EMBL" id="CP002826">
    <property type="protein sequence ID" value="AEI06546.1"/>
    <property type="molecule type" value="Genomic_DNA"/>
</dbReference>
<dbReference type="RefSeq" id="WP_012563338.1">
    <property type="nucleotide sequence ID" value="NC_015684.1"/>
</dbReference>
<dbReference type="SMR" id="B6JF93"/>
<dbReference type="STRING" id="504832.OCA5_c18330"/>
<dbReference type="KEGG" id="oca:OCAR_6198"/>
<dbReference type="KEGG" id="ocg:OCA5_c18330"/>
<dbReference type="PATRIC" id="fig|504832.7.peg.1956"/>
<dbReference type="eggNOG" id="COG0621">
    <property type="taxonomic scope" value="Bacteria"/>
</dbReference>
<dbReference type="HOGENOM" id="CLU_018697_0_0_5"/>
<dbReference type="OrthoDB" id="9805215at2"/>
<dbReference type="Proteomes" id="UP000007730">
    <property type="component" value="Chromosome"/>
</dbReference>
<dbReference type="GO" id="GO:0005829">
    <property type="term" value="C:cytosol"/>
    <property type="evidence" value="ECO:0007669"/>
    <property type="project" value="TreeGrafter"/>
</dbReference>
<dbReference type="GO" id="GO:0051539">
    <property type="term" value="F:4 iron, 4 sulfur cluster binding"/>
    <property type="evidence" value="ECO:0007669"/>
    <property type="project" value="UniProtKB-UniRule"/>
</dbReference>
<dbReference type="GO" id="GO:0035599">
    <property type="term" value="F:aspartic acid methylthiotransferase activity"/>
    <property type="evidence" value="ECO:0007669"/>
    <property type="project" value="TreeGrafter"/>
</dbReference>
<dbReference type="GO" id="GO:0046872">
    <property type="term" value="F:metal ion binding"/>
    <property type="evidence" value="ECO:0007669"/>
    <property type="project" value="UniProtKB-KW"/>
</dbReference>
<dbReference type="GO" id="GO:0103039">
    <property type="term" value="F:protein methylthiotransferase activity"/>
    <property type="evidence" value="ECO:0007669"/>
    <property type="project" value="UniProtKB-EC"/>
</dbReference>
<dbReference type="GO" id="GO:0006400">
    <property type="term" value="P:tRNA modification"/>
    <property type="evidence" value="ECO:0007669"/>
    <property type="project" value="InterPro"/>
</dbReference>
<dbReference type="CDD" id="cd01335">
    <property type="entry name" value="Radical_SAM"/>
    <property type="match status" value="1"/>
</dbReference>
<dbReference type="FunFam" id="2.40.50.140:FF:000060">
    <property type="entry name" value="Ribosomal protein S12 methylthiotransferase RimO"/>
    <property type="match status" value="1"/>
</dbReference>
<dbReference type="FunFam" id="3.40.50.12160:FF:000002">
    <property type="entry name" value="Ribosomal protein S12 methylthiotransferase RimO"/>
    <property type="match status" value="1"/>
</dbReference>
<dbReference type="FunFam" id="3.80.30.20:FF:000001">
    <property type="entry name" value="tRNA-2-methylthio-N(6)-dimethylallyladenosine synthase 2"/>
    <property type="match status" value="1"/>
</dbReference>
<dbReference type="Gene3D" id="3.40.50.12160">
    <property type="entry name" value="Methylthiotransferase, N-terminal domain"/>
    <property type="match status" value="1"/>
</dbReference>
<dbReference type="Gene3D" id="2.40.50.140">
    <property type="entry name" value="Nucleic acid-binding proteins"/>
    <property type="match status" value="1"/>
</dbReference>
<dbReference type="Gene3D" id="3.80.30.20">
    <property type="entry name" value="tm_1862 like domain"/>
    <property type="match status" value="1"/>
</dbReference>
<dbReference type="HAMAP" id="MF_01865">
    <property type="entry name" value="MTTase_RimO"/>
    <property type="match status" value="1"/>
</dbReference>
<dbReference type="InterPro" id="IPR006638">
    <property type="entry name" value="Elp3/MiaA/NifB-like_rSAM"/>
</dbReference>
<dbReference type="InterPro" id="IPR005839">
    <property type="entry name" value="Methylthiotransferase"/>
</dbReference>
<dbReference type="InterPro" id="IPR020612">
    <property type="entry name" value="Methylthiotransferase_CS"/>
</dbReference>
<dbReference type="InterPro" id="IPR013848">
    <property type="entry name" value="Methylthiotransferase_N"/>
</dbReference>
<dbReference type="InterPro" id="IPR038135">
    <property type="entry name" value="Methylthiotransferase_N_sf"/>
</dbReference>
<dbReference type="InterPro" id="IPR012340">
    <property type="entry name" value="NA-bd_OB-fold"/>
</dbReference>
<dbReference type="InterPro" id="IPR005840">
    <property type="entry name" value="Ribosomal_uS12_MeSTrfase_RimO"/>
</dbReference>
<dbReference type="InterPro" id="IPR007197">
    <property type="entry name" value="rSAM"/>
</dbReference>
<dbReference type="InterPro" id="IPR023404">
    <property type="entry name" value="rSAM_horseshoe"/>
</dbReference>
<dbReference type="InterPro" id="IPR002792">
    <property type="entry name" value="TRAM_dom"/>
</dbReference>
<dbReference type="NCBIfam" id="TIGR01125">
    <property type="entry name" value="30S ribosomal protein S12 methylthiotransferase RimO"/>
    <property type="match status" value="1"/>
</dbReference>
<dbReference type="NCBIfam" id="TIGR00089">
    <property type="entry name" value="MiaB/RimO family radical SAM methylthiotransferase"/>
    <property type="match status" value="1"/>
</dbReference>
<dbReference type="PANTHER" id="PTHR43837">
    <property type="entry name" value="RIBOSOMAL PROTEIN S12 METHYLTHIOTRANSFERASE RIMO"/>
    <property type="match status" value="1"/>
</dbReference>
<dbReference type="PANTHER" id="PTHR43837:SF1">
    <property type="entry name" value="RIBOSOMAL PROTEIN US12 METHYLTHIOTRANSFERASE RIMO"/>
    <property type="match status" value="1"/>
</dbReference>
<dbReference type="Pfam" id="PF04055">
    <property type="entry name" value="Radical_SAM"/>
    <property type="match status" value="1"/>
</dbReference>
<dbReference type="Pfam" id="PF18693">
    <property type="entry name" value="TRAM_2"/>
    <property type="match status" value="1"/>
</dbReference>
<dbReference type="Pfam" id="PF00919">
    <property type="entry name" value="UPF0004"/>
    <property type="match status" value="1"/>
</dbReference>
<dbReference type="SFLD" id="SFLDG01082">
    <property type="entry name" value="B12-binding_domain_containing"/>
    <property type="match status" value="1"/>
</dbReference>
<dbReference type="SFLD" id="SFLDS00029">
    <property type="entry name" value="Radical_SAM"/>
    <property type="match status" value="1"/>
</dbReference>
<dbReference type="SFLD" id="SFLDF00274">
    <property type="entry name" value="ribosomal_protein_S12_methylth"/>
    <property type="match status" value="1"/>
</dbReference>
<dbReference type="SMART" id="SM00729">
    <property type="entry name" value="Elp3"/>
    <property type="match status" value="1"/>
</dbReference>
<dbReference type="SUPFAM" id="SSF102114">
    <property type="entry name" value="Radical SAM enzymes"/>
    <property type="match status" value="1"/>
</dbReference>
<dbReference type="PROSITE" id="PS51449">
    <property type="entry name" value="MTTASE_N"/>
    <property type="match status" value="1"/>
</dbReference>
<dbReference type="PROSITE" id="PS01278">
    <property type="entry name" value="MTTASE_RADICAL"/>
    <property type="match status" value="1"/>
</dbReference>
<dbReference type="PROSITE" id="PS51918">
    <property type="entry name" value="RADICAL_SAM"/>
    <property type="match status" value="1"/>
</dbReference>
<dbReference type="PROSITE" id="PS50926">
    <property type="entry name" value="TRAM"/>
    <property type="match status" value="1"/>
</dbReference>
<name>RIMO_AFIC5</name>
<keyword id="KW-0004">4Fe-4S</keyword>
<keyword id="KW-0963">Cytoplasm</keyword>
<keyword id="KW-0408">Iron</keyword>
<keyword id="KW-0411">Iron-sulfur</keyword>
<keyword id="KW-0479">Metal-binding</keyword>
<keyword id="KW-1185">Reference proteome</keyword>
<keyword id="KW-0949">S-adenosyl-L-methionine</keyword>
<keyword id="KW-0808">Transferase</keyword>
<accession>B6JF93</accession>
<accession>F8BTP6</accession>
<feature type="chain" id="PRO_0000374909" description="Ribosomal protein uS12 methylthiotransferase RimO">
    <location>
        <begin position="1"/>
        <end position="440"/>
    </location>
</feature>
<feature type="domain" description="MTTase N-terminal" evidence="1">
    <location>
        <begin position="7"/>
        <end position="117"/>
    </location>
</feature>
<feature type="domain" description="Radical SAM core" evidence="2">
    <location>
        <begin position="134"/>
        <end position="370"/>
    </location>
</feature>
<feature type="domain" description="TRAM" evidence="1">
    <location>
        <begin position="373"/>
        <end position="439"/>
    </location>
</feature>
<feature type="binding site" evidence="1">
    <location>
        <position position="16"/>
    </location>
    <ligand>
        <name>[4Fe-4S] cluster</name>
        <dbReference type="ChEBI" id="CHEBI:49883"/>
        <label>1</label>
    </ligand>
</feature>
<feature type="binding site" evidence="1">
    <location>
        <position position="52"/>
    </location>
    <ligand>
        <name>[4Fe-4S] cluster</name>
        <dbReference type="ChEBI" id="CHEBI:49883"/>
        <label>1</label>
    </ligand>
</feature>
<feature type="binding site" evidence="1">
    <location>
        <position position="81"/>
    </location>
    <ligand>
        <name>[4Fe-4S] cluster</name>
        <dbReference type="ChEBI" id="CHEBI:49883"/>
        <label>1</label>
    </ligand>
</feature>
<feature type="binding site" evidence="1">
    <location>
        <position position="148"/>
    </location>
    <ligand>
        <name>[4Fe-4S] cluster</name>
        <dbReference type="ChEBI" id="CHEBI:49883"/>
        <label>2</label>
        <note>4Fe-4S-S-AdoMet</note>
    </ligand>
</feature>
<feature type="binding site" evidence="1">
    <location>
        <position position="152"/>
    </location>
    <ligand>
        <name>[4Fe-4S] cluster</name>
        <dbReference type="ChEBI" id="CHEBI:49883"/>
        <label>2</label>
        <note>4Fe-4S-S-AdoMet</note>
    </ligand>
</feature>
<feature type="binding site" evidence="1">
    <location>
        <position position="155"/>
    </location>
    <ligand>
        <name>[4Fe-4S] cluster</name>
        <dbReference type="ChEBI" id="CHEBI:49883"/>
        <label>2</label>
        <note>4Fe-4S-S-AdoMet</note>
    </ligand>
</feature>
<comment type="function">
    <text evidence="1">Catalyzes the methylthiolation of an aspartic acid residue of ribosomal protein uS12.</text>
</comment>
<comment type="catalytic activity">
    <reaction evidence="1">
        <text>L-aspartate(89)-[ribosomal protein uS12]-hydrogen + (sulfur carrier)-SH + AH2 + 2 S-adenosyl-L-methionine = 3-methylsulfanyl-L-aspartate(89)-[ribosomal protein uS12]-hydrogen + (sulfur carrier)-H + 5'-deoxyadenosine + L-methionine + A + S-adenosyl-L-homocysteine + 2 H(+)</text>
        <dbReference type="Rhea" id="RHEA:37087"/>
        <dbReference type="Rhea" id="RHEA-COMP:10460"/>
        <dbReference type="Rhea" id="RHEA-COMP:10461"/>
        <dbReference type="Rhea" id="RHEA-COMP:14737"/>
        <dbReference type="Rhea" id="RHEA-COMP:14739"/>
        <dbReference type="ChEBI" id="CHEBI:13193"/>
        <dbReference type="ChEBI" id="CHEBI:15378"/>
        <dbReference type="ChEBI" id="CHEBI:17319"/>
        <dbReference type="ChEBI" id="CHEBI:17499"/>
        <dbReference type="ChEBI" id="CHEBI:29917"/>
        <dbReference type="ChEBI" id="CHEBI:29961"/>
        <dbReference type="ChEBI" id="CHEBI:57844"/>
        <dbReference type="ChEBI" id="CHEBI:57856"/>
        <dbReference type="ChEBI" id="CHEBI:59789"/>
        <dbReference type="ChEBI" id="CHEBI:64428"/>
        <dbReference type="ChEBI" id="CHEBI:73599"/>
        <dbReference type="EC" id="2.8.4.4"/>
    </reaction>
</comment>
<comment type="cofactor">
    <cofactor evidence="1">
        <name>[4Fe-4S] cluster</name>
        <dbReference type="ChEBI" id="CHEBI:49883"/>
    </cofactor>
    <text evidence="1">Binds 2 [4Fe-4S] clusters. One cluster is coordinated with 3 cysteines and an exchangeable S-adenosyl-L-methionine.</text>
</comment>
<comment type="subcellular location">
    <subcellularLocation>
        <location evidence="1">Cytoplasm</location>
    </subcellularLocation>
</comment>
<comment type="similarity">
    <text evidence="1">Belongs to the methylthiotransferase family. RimO subfamily.</text>
</comment>
<gene>
    <name evidence="1" type="primary">rimO</name>
    <name type="ordered locus">OCAR_6198</name>
    <name type="ordered locus">OCA5_c18330</name>
</gene>
<reference key="1">
    <citation type="journal article" date="2008" name="J. Bacteriol.">
        <title>Genome sequence of the chemolithoautotrophic bacterium Oligotropha carboxidovorans OM5T.</title>
        <authorList>
            <person name="Paul D."/>
            <person name="Bridges S."/>
            <person name="Burgess S.C."/>
            <person name="Dandass Y."/>
            <person name="Lawrence M.L."/>
        </authorList>
    </citation>
    <scope>NUCLEOTIDE SEQUENCE [LARGE SCALE GENOMIC DNA]</scope>
    <source>
        <strain>ATCC 49405 / DSM 1227 / KCTC 32145 / OM5</strain>
    </source>
</reference>
<reference key="2">
    <citation type="journal article" date="2011" name="J. Bacteriol.">
        <title>Complete genome sequences of the chemolithoautotrophic Oligotropha carboxidovorans strains OM4 and OM5.</title>
        <authorList>
            <person name="Volland S."/>
            <person name="Rachinger M."/>
            <person name="Strittmatter A."/>
            <person name="Daniel R."/>
            <person name="Gottschalk G."/>
            <person name="Meyer O."/>
        </authorList>
    </citation>
    <scope>NUCLEOTIDE SEQUENCE [LARGE SCALE GENOMIC DNA]</scope>
    <source>
        <strain>ATCC 49405 / DSM 1227 / KCTC 32145 / OM5</strain>
    </source>
</reference>
<protein>
    <recommendedName>
        <fullName evidence="1">Ribosomal protein uS12 methylthiotransferase RimO</fullName>
        <shortName evidence="1">uS12 MTTase</shortName>
        <shortName evidence="1">uS12 methylthiotransferase</shortName>
        <ecNumber evidence="1">2.8.4.4</ecNumber>
    </recommendedName>
    <alternativeName>
        <fullName evidence="1">Ribosomal protein uS12 (aspartate-C(3))-methylthiotransferase</fullName>
    </alternativeName>
    <alternativeName>
        <fullName evidence="1">Ribosome maturation factor RimO</fullName>
    </alternativeName>
</protein>
<organism>
    <name type="scientific">Afipia carboxidovorans (strain ATCC 49405 / DSM 1227 / KCTC 32145 / OM5)</name>
    <name type="common">Oligotropha carboxidovorans</name>
    <dbReference type="NCBI Taxonomy" id="504832"/>
    <lineage>
        <taxon>Bacteria</taxon>
        <taxon>Pseudomonadati</taxon>
        <taxon>Pseudomonadota</taxon>
        <taxon>Alphaproteobacteria</taxon>
        <taxon>Hyphomicrobiales</taxon>
        <taxon>Nitrobacteraceae</taxon>
        <taxon>Afipia</taxon>
    </lineage>
</organism>
<proteinExistence type="inferred from homology"/>